<sequence length="195" mass="22461">MTINTNNLTITISAASKKQYPENDWPEIALAGRSNVGKSSFINTLLNRKNFARTSGQPGKTQLLNFYNIDDQLHFVDVPGYGYARVSKKEREKWGKMIEEYLTTRENLKAVVSLVDIRHEPSEDDLMMYEFLKYYHIPVILVATKADKVPRGKWNKHESIIKKAMKFDSTDDFIIFSSTDKTGIEEAWTAILKYL</sequence>
<name>ENGB_LACLM</name>
<dbReference type="EMBL" id="AF236863">
    <property type="protein sequence ID" value="AAF63739.1"/>
    <property type="molecule type" value="Genomic_DNA"/>
</dbReference>
<dbReference type="EMBL" id="AM406671">
    <property type="protein sequence ID" value="CAL97930.1"/>
    <property type="molecule type" value="Genomic_DNA"/>
</dbReference>
<dbReference type="RefSeq" id="WP_011676272.1">
    <property type="nucleotide sequence ID" value="NC_009004.1"/>
</dbReference>
<dbReference type="SMR" id="Q9L6G1"/>
<dbReference type="STRING" id="416870.llmg_1339"/>
<dbReference type="GeneID" id="61109400"/>
<dbReference type="KEGG" id="llm:llmg_1339"/>
<dbReference type="eggNOG" id="COG0218">
    <property type="taxonomic scope" value="Bacteria"/>
</dbReference>
<dbReference type="HOGENOM" id="CLU_033732_3_0_9"/>
<dbReference type="OrthoDB" id="9804921at2"/>
<dbReference type="PhylomeDB" id="Q9L6G1"/>
<dbReference type="Proteomes" id="UP000000364">
    <property type="component" value="Chromosome"/>
</dbReference>
<dbReference type="GO" id="GO:0005829">
    <property type="term" value="C:cytosol"/>
    <property type="evidence" value="ECO:0007669"/>
    <property type="project" value="TreeGrafter"/>
</dbReference>
<dbReference type="GO" id="GO:0005525">
    <property type="term" value="F:GTP binding"/>
    <property type="evidence" value="ECO:0007669"/>
    <property type="project" value="UniProtKB-UniRule"/>
</dbReference>
<dbReference type="GO" id="GO:0046872">
    <property type="term" value="F:metal ion binding"/>
    <property type="evidence" value="ECO:0007669"/>
    <property type="project" value="UniProtKB-KW"/>
</dbReference>
<dbReference type="GO" id="GO:0000917">
    <property type="term" value="P:division septum assembly"/>
    <property type="evidence" value="ECO:0007669"/>
    <property type="project" value="UniProtKB-KW"/>
</dbReference>
<dbReference type="CDD" id="cd01876">
    <property type="entry name" value="YihA_EngB"/>
    <property type="match status" value="1"/>
</dbReference>
<dbReference type="FunFam" id="3.40.50.300:FF:000098">
    <property type="entry name" value="Probable GTP-binding protein EngB"/>
    <property type="match status" value="1"/>
</dbReference>
<dbReference type="Gene3D" id="3.40.50.300">
    <property type="entry name" value="P-loop containing nucleotide triphosphate hydrolases"/>
    <property type="match status" value="1"/>
</dbReference>
<dbReference type="HAMAP" id="MF_00321">
    <property type="entry name" value="GTPase_EngB"/>
    <property type="match status" value="1"/>
</dbReference>
<dbReference type="InterPro" id="IPR030393">
    <property type="entry name" value="G_ENGB_dom"/>
</dbReference>
<dbReference type="InterPro" id="IPR006073">
    <property type="entry name" value="GTP-bd"/>
</dbReference>
<dbReference type="InterPro" id="IPR019987">
    <property type="entry name" value="GTP-bd_ribosome_bio_YsxC"/>
</dbReference>
<dbReference type="InterPro" id="IPR027417">
    <property type="entry name" value="P-loop_NTPase"/>
</dbReference>
<dbReference type="NCBIfam" id="TIGR03598">
    <property type="entry name" value="GTPase_YsxC"/>
    <property type="match status" value="1"/>
</dbReference>
<dbReference type="PANTHER" id="PTHR11649:SF13">
    <property type="entry name" value="ENGB-TYPE G DOMAIN-CONTAINING PROTEIN"/>
    <property type="match status" value="1"/>
</dbReference>
<dbReference type="PANTHER" id="PTHR11649">
    <property type="entry name" value="MSS1/TRME-RELATED GTP-BINDING PROTEIN"/>
    <property type="match status" value="1"/>
</dbReference>
<dbReference type="Pfam" id="PF01926">
    <property type="entry name" value="MMR_HSR1"/>
    <property type="match status" value="1"/>
</dbReference>
<dbReference type="PRINTS" id="PR00449">
    <property type="entry name" value="RASTRNSFRMNG"/>
</dbReference>
<dbReference type="SUPFAM" id="SSF52540">
    <property type="entry name" value="P-loop containing nucleoside triphosphate hydrolases"/>
    <property type="match status" value="1"/>
</dbReference>
<dbReference type="PROSITE" id="PS51706">
    <property type="entry name" value="G_ENGB"/>
    <property type="match status" value="1"/>
</dbReference>
<comment type="function">
    <text evidence="1">Necessary for normal cell division and for the maintenance of normal septation.</text>
</comment>
<comment type="cofactor">
    <cofactor evidence="1">
        <name>Mg(2+)</name>
        <dbReference type="ChEBI" id="CHEBI:18420"/>
    </cofactor>
</comment>
<comment type="similarity">
    <text evidence="1">Belongs to the TRAFAC class TrmE-Era-EngA-EngB-Septin-like GTPase superfamily. EngB GTPase family.</text>
</comment>
<protein>
    <recommendedName>
        <fullName evidence="1">Probable GTP-binding protein EngB</fullName>
    </recommendedName>
</protein>
<organism>
    <name type="scientific">Lactococcus lactis subsp. cremoris (strain MG1363)</name>
    <dbReference type="NCBI Taxonomy" id="416870"/>
    <lineage>
        <taxon>Bacteria</taxon>
        <taxon>Bacillati</taxon>
        <taxon>Bacillota</taxon>
        <taxon>Bacilli</taxon>
        <taxon>Lactobacillales</taxon>
        <taxon>Streptococcaceae</taxon>
        <taxon>Lactococcus</taxon>
        <taxon>Lactococcus cremoris subsp. cremoris</taxon>
    </lineage>
</organism>
<reference key="1">
    <citation type="submission" date="2000-02" db="EMBL/GenBank/DDBJ databases">
        <title>Sequence analysis and comparison of the clpX region from Lactococcus lactis.</title>
        <authorList>
            <person name="Skinner M.M."/>
            <person name="Trempy J.E."/>
        </authorList>
    </citation>
    <scope>NUCLEOTIDE SEQUENCE [GENOMIC DNA]</scope>
</reference>
<reference key="2">
    <citation type="journal article" date="2007" name="J. Bacteriol.">
        <title>The complete genome sequence of the lactic acid bacterial paradigm Lactococcus lactis subsp. cremoris MG1363.</title>
        <authorList>
            <person name="Wegmann U."/>
            <person name="O'Connell-Motherway M."/>
            <person name="Zomer A."/>
            <person name="Buist G."/>
            <person name="Shearman C."/>
            <person name="Canchaya C."/>
            <person name="Ventura M."/>
            <person name="Goesmann A."/>
            <person name="Gasson M.J."/>
            <person name="Kuipers O.P."/>
            <person name="van Sinderen D."/>
            <person name="Kok J."/>
        </authorList>
    </citation>
    <scope>NUCLEOTIDE SEQUENCE [LARGE SCALE GENOMIC DNA]</scope>
    <source>
        <strain>MG1363</strain>
    </source>
</reference>
<accession>Q9L6G1</accession>
<accession>A2RKW4</accession>
<keyword id="KW-0131">Cell cycle</keyword>
<keyword id="KW-0132">Cell division</keyword>
<keyword id="KW-0342">GTP-binding</keyword>
<keyword id="KW-0460">Magnesium</keyword>
<keyword id="KW-0479">Metal-binding</keyword>
<keyword id="KW-0547">Nucleotide-binding</keyword>
<keyword id="KW-0717">Septation</keyword>
<evidence type="ECO:0000255" key="1">
    <source>
        <dbReference type="HAMAP-Rule" id="MF_00321"/>
    </source>
</evidence>
<proteinExistence type="inferred from homology"/>
<feature type="chain" id="PRO_0000157756" description="Probable GTP-binding protein EngB">
    <location>
        <begin position="1"/>
        <end position="195"/>
    </location>
</feature>
<feature type="domain" description="EngB-type G" evidence="1">
    <location>
        <begin position="24"/>
        <end position="195"/>
    </location>
</feature>
<feature type="binding site" evidence="1">
    <location>
        <begin position="32"/>
        <end position="39"/>
    </location>
    <ligand>
        <name>GTP</name>
        <dbReference type="ChEBI" id="CHEBI:37565"/>
    </ligand>
</feature>
<feature type="binding site" evidence="1">
    <location>
        <position position="39"/>
    </location>
    <ligand>
        <name>Mg(2+)</name>
        <dbReference type="ChEBI" id="CHEBI:18420"/>
    </ligand>
</feature>
<feature type="binding site" evidence="1">
    <location>
        <begin position="59"/>
        <end position="63"/>
    </location>
    <ligand>
        <name>GTP</name>
        <dbReference type="ChEBI" id="CHEBI:37565"/>
    </ligand>
</feature>
<feature type="binding site" evidence="1">
    <location>
        <position position="61"/>
    </location>
    <ligand>
        <name>Mg(2+)</name>
        <dbReference type="ChEBI" id="CHEBI:18420"/>
    </ligand>
</feature>
<feature type="binding site" evidence="1">
    <location>
        <begin position="77"/>
        <end position="80"/>
    </location>
    <ligand>
        <name>GTP</name>
        <dbReference type="ChEBI" id="CHEBI:37565"/>
    </ligand>
</feature>
<feature type="binding site" evidence="1">
    <location>
        <begin position="144"/>
        <end position="147"/>
    </location>
    <ligand>
        <name>GTP</name>
        <dbReference type="ChEBI" id="CHEBI:37565"/>
    </ligand>
</feature>
<feature type="binding site" evidence="1">
    <location>
        <begin position="176"/>
        <end position="178"/>
    </location>
    <ligand>
        <name>GTP</name>
        <dbReference type="ChEBI" id="CHEBI:37565"/>
    </ligand>
</feature>
<gene>
    <name evidence="1" type="primary">engB</name>
    <name type="ordered locus">llmg_1339</name>
</gene>